<comment type="similarity">
    <text evidence="3">Belongs to the bacterial ribosomal protein bS21 family.</text>
</comment>
<sequence>MAEVRLGENESIDSAIRRFKKKIQKAGILSEVKRRERYEKPSLRRKRKAEAARKGGRY</sequence>
<evidence type="ECO:0000255" key="1">
    <source>
        <dbReference type="HAMAP-Rule" id="MF_00358"/>
    </source>
</evidence>
<evidence type="ECO:0000256" key="2">
    <source>
        <dbReference type="SAM" id="MobiDB-lite"/>
    </source>
</evidence>
<evidence type="ECO:0000305" key="3"/>
<reference key="1">
    <citation type="journal article" date="2001" name="DNA Res.">
        <title>Complete genomic sequence of the filamentous nitrogen-fixing cyanobacterium Anabaena sp. strain PCC 7120.</title>
        <authorList>
            <person name="Kaneko T."/>
            <person name="Nakamura Y."/>
            <person name="Wolk C.P."/>
            <person name="Kuritz T."/>
            <person name="Sasamoto S."/>
            <person name="Watanabe A."/>
            <person name="Iriguchi M."/>
            <person name="Ishikawa A."/>
            <person name="Kawashima K."/>
            <person name="Kimura T."/>
            <person name="Kishida Y."/>
            <person name="Kohara M."/>
            <person name="Matsumoto M."/>
            <person name="Matsuno A."/>
            <person name="Muraki A."/>
            <person name="Nakazaki N."/>
            <person name="Shimpo S."/>
            <person name="Sugimoto M."/>
            <person name="Takazawa M."/>
            <person name="Yamada M."/>
            <person name="Yasuda M."/>
            <person name="Tabata S."/>
        </authorList>
    </citation>
    <scope>NUCLEOTIDE SEQUENCE [LARGE SCALE GENOMIC DNA]</scope>
    <source>
        <strain>PCC 7120 / SAG 25.82 / UTEX 2576</strain>
    </source>
</reference>
<name>RS21C_NOSS1</name>
<protein>
    <recommendedName>
        <fullName evidence="1">Small ribosomal subunit protein bS21C</fullName>
    </recommendedName>
    <alternativeName>
        <fullName evidence="3">30S ribosomal protein S21 3</fullName>
    </alternativeName>
</protein>
<organism>
    <name type="scientific">Nostoc sp. (strain PCC 7120 / SAG 25.82 / UTEX 2576)</name>
    <dbReference type="NCBI Taxonomy" id="103690"/>
    <lineage>
        <taxon>Bacteria</taxon>
        <taxon>Bacillati</taxon>
        <taxon>Cyanobacteriota</taxon>
        <taxon>Cyanophyceae</taxon>
        <taxon>Nostocales</taxon>
        <taxon>Nostocaceae</taxon>
        <taxon>Nostoc</taxon>
    </lineage>
</organism>
<accession>Q8YVM0</accession>
<feature type="chain" id="PRO_0000178289" description="Small ribosomal subunit protein bS21C">
    <location>
        <begin position="1"/>
        <end position="58"/>
    </location>
</feature>
<feature type="region of interest" description="Disordered" evidence="2">
    <location>
        <begin position="38"/>
        <end position="58"/>
    </location>
</feature>
<feature type="compositionally biased region" description="Basic and acidic residues" evidence="2">
    <location>
        <begin position="49"/>
        <end position="58"/>
    </location>
</feature>
<proteinExistence type="inferred from homology"/>
<dbReference type="EMBL" id="BA000019">
    <property type="protein sequence ID" value="BAB73654.1"/>
    <property type="molecule type" value="Genomic_DNA"/>
</dbReference>
<dbReference type="PIR" id="AE2050">
    <property type="entry name" value="AE2050"/>
</dbReference>
<dbReference type="SMR" id="Q8YVM0"/>
<dbReference type="STRING" id="103690.gene:10493974"/>
<dbReference type="KEGG" id="ana:asr1955"/>
<dbReference type="eggNOG" id="COG0828">
    <property type="taxonomic scope" value="Bacteria"/>
</dbReference>
<dbReference type="OrthoDB" id="9799244at2"/>
<dbReference type="Proteomes" id="UP000002483">
    <property type="component" value="Chromosome"/>
</dbReference>
<dbReference type="GO" id="GO:1990904">
    <property type="term" value="C:ribonucleoprotein complex"/>
    <property type="evidence" value="ECO:0007669"/>
    <property type="project" value="UniProtKB-KW"/>
</dbReference>
<dbReference type="GO" id="GO:0005840">
    <property type="term" value="C:ribosome"/>
    <property type="evidence" value="ECO:0007669"/>
    <property type="project" value="UniProtKB-KW"/>
</dbReference>
<dbReference type="GO" id="GO:0003735">
    <property type="term" value="F:structural constituent of ribosome"/>
    <property type="evidence" value="ECO:0007669"/>
    <property type="project" value="InterPro"/>
</dbReference>
<dbReference type="GO" id="GO:0006412">
    <property type="term" value="P:translation"/>
    <property type="evidence" value="ECO:0007669"/>
    <property type="project" value="UniProtKB-UniRule"/>
</dbReference>
<dbReference type="Gene3D" id="1.20.5.1150">
    <property type="entry name" value="Ribosomal protein S8"/>
    <property type="match status" value="1"/>
</dbReference>
<dbReference type="HAMAP" id="MF_00358">
    <property type="entry name" value="Ribosomal_bS21"/>
    <property type="match status" value="1"/>
</dbReference>
<dbReference type="InterPro" id="IPR001911">
    <property type="entry name" value="Ribosomal_bS21"/>
</dbReference>
<dbReference type="InterPro" id="IPR018278">
    <property type="entry name" value="Ribosomal_bS21_CS"/>
</dbReference>
<dbReference type="InterPro" id="IPR038380">
    <property type="entry name" value="Ribosomal_bS21_sf"/>
</dbReference>
<dbReference type="NCBIfam" id="TIGR00030">
    <property type="entry name" value="S21p"/>
    <property type="match status" value="1"/>
</dbReference>
<dbReference type="PANTHER" id="PTHR21109">
    <property type="entry name" value="MITOCHONDRIAL 28S RIBOSOMAL PROTEIN S21"/>
    <property type="match status" value="1"/>
</dbReference>
<dbReference type="PANTHER" id="PTHR21109:SF22">
    <property type="entry name" value="SMALL RIBOSOMAL SUBUNIT PROTEIN BS21"/>
    <property type="match status" value="1"/>
</dbReference>
<dbReference type="Pfam" id="PF01165">
    <property type="entry name" value="Ribosomal_S21"/>
    <property type="match status" value="1"/>
</dbReference>
<dbReference type="PRINTS" id="PR00976">
    <property type="entry name" value="RIBOSOMALS21"/>
</dbReference>
<dbReference type="PROSITE" id="PS01181">
    <property type="entry name" value="RIBOSOMAL_S21"/>
    <property type="match status" value="1"/>
</dbReference>
<gene>
    <name type="primary">rpsU3</name>
    <name type="synonym">rps21</name>
    <name type="ordered locus">asr1955</name>
</gene>
<keyword id="KW-1185">Reference proteome</keyword>
<keyword id="KW-0687">Ribonucleoprotein</keyword>
<keyword id="KW-0689">Ribosomal protein</keyword>